<dbReference type="EC" id="1.-.-.-" evidence="8"/>
<dbReference type="EMBL" id="LC079035">
    <property type="protein sequence ID" value="BAV32164.1"/>
    <property type="molecule type" value="Genomic_DNA"/>
</dbReference>
<dbReference type="SMR" id="A0A1B4XBI3"/>
<dbReference type="GlyCosmos" id="A0A1B4XBI3">
    <property type="glycosylation" value="2 sites, No reported glycans"/>
</dbReference>
<dbReference type="GO" id="GO:0016020">
    <property type="term" value="C:membrane"/>
    <property type="evidence" value="ECO:0007669"/>
    <property type="project" value="UniProtKB-SubCell"/>
</dbReference>
<dbReference type="GO" id="GO:0020037">
    <property type="term" value="F:heme binding"/>
    <property type="evidence" value="ECO:0007669"/>
    <property type="project" value="InterPro"/>
</dbReference>
<dbReference type="GO" id="GO:0005506">
    <property type="term" value="F:iron ion binding"/>
    <property type="evidence" value="ECO:0007669"/>
    <property type="project" value="InterPro"/>
</dbReference>
<dbReference type="GO" id="GO:0004497">
    <property type="term" value="F:monooxygenase activity"/>
    <property type="evidence" value="ECO:0007669"/>
    <property type="project" value="UniProtKB-KW"/>
</dbReference>
<dbReference type="GO" id="GO:0016705">
    <property type="term" value="F:oxidoreductase activity, acting on paired donors, with incorporation or reduction of molecular oxygen"/>
    <property type="evidence" value="ECO:0007669"/>
    <property type="project" value="InterPro"/>
</dbReference>
<dbReference type="GO" id="GO:0017000">
    <property type="term" value="P:antibiotic biosynthetic process"/>
    <property type="evidence" value="ECO:0007669"/>
    <property type="project" value="UniProtKB-KW"/>
</dbReference>
<dbReference type="Gene3D" id="1.10.630.10">
    <property type="entry name" value="Cytochrome P450"/>
    <property type="match status" value="1"/>
</dbReference>
<dbReference type="InterPro" id="IPR001128">
    <property type="entry name" value="Cyt_P450"/>
</dbReference>
<dbReference type="InterPro" id="IPR017972">
    <property type="entry name" value="Cyt_P450_CS"/>
</dbReference>
<dbReference type="InterPro" id="IPR002401">
    <property type="entry name" value="Cyt_P450_E_grp-I"/>
</dbReference>
<dbReference type="InterPro" id="IPR036396">
    <property type="entry name" value="Cyt_P450_sf"/>
</dbReference>
<dbReference type="InterPro" id="IPR050121">
    <property type="entry name" value="Cytochrome_P450_monoxygenase"/>
</dbReference>
<dbReference type="PANTHER" id="PTHR24305">
    <property type="entry name" value="CYTOCHROME P450"/>
    <property type="match status" value="1"/>
</dbReference>
<dbReference type="PANTHER" id="PTHR24305:SF232">
    <property type="entry name" value="P450, PUTATIVE (EUROFUNG)-RELATED"/>
    <property type="match status" value="1"/>
</dbReference>
<dbReference type="Pfam" id="PF00067">
    <property type="entry name" value="p450"/>
    <property type="match status" value="1"/>
</dbReference>
<dbReference type="PRINTS" id="PR00463">
    <property type="entry name" value="EP450I"/>
</dbReference>
<dbReference type="PRINTS" id="PR00385">
    <property type="entry name" value="P450"/>
</dbReference>
<dbReference type="SUPFAM" id="SSF48264">
    <property type="entry name" value="Cytochrome P450"/>
    <property type="match status" value="1"/>
</dbReference>
<dbReference type="PROSITE" id="PS00086">
    <property type="entry name" value="CYTOCHROME_P450"/>
    <property type="match status" value="1"/>
</dbReference>
<organism>
    <name type="scientific">Sordaria araneosa</name>
    <name type="common">Pleurage araneosa</name>
    <dbReference type="NCBI Taxonomy" id="573841"/>
    <lineage>
        <taxon>Eukaryota</taxon>
        <taxon>Fungi</taxon>
        <taxon>Dikarya</taxon>
        <taxon>Ascomycota</taxon>
        <taxon>Pezizomycotina</taxon>
        <taxon>Sordariomycetes</taxon>
        <taxon>Sordariomycetidae</taxon>
        <taxon>Sordariales</taxon>
        <taxon>Sordariaceae</taxon>
        <taxon>Sordaria</taxon>
    </lineage>
</organism>
<comment type="function">
    <text evidence="5">Cytochrome P450 monooxygenase; part of the gene cluster that mediates the biosynthesis of sordarin and hypoxysordarin, glycoside antibiotics with a unique tetracyclic diterpene aglycone structure (PubMed:27072286). First, the geranylgeranyl diphosphate synthase sdnC constructs GGDP from farnesyl diphosphate and isopentenyl diphosphate (PubMed:27072286). The diterpene cyclase sdnA then catalyzes the cyclization of GGDP to afford cycloaraneosene (PubMed:27072286). Cycloaraneosene is then hydroxylated four times by the putative cytochrome P450 monooxygenases sdnB, sdnE, sdnF and sdnH to give a hydroxylated cycloaraneosene derivative such as cycloaraneosene-8,9,13,19-tetraol (PubMed:27072286). Although the order of the hydroxylations is unclear, at least C8, C9 and C13 of the cycloaraneosene skeleton are hydroxylated before the sordaricin formation (PubMed:27072286). Dehydration of the 13-hydroxy group of the hydroxylated cycloaraneosene derivative might be catalyzed by an unassigned hypothetical protein such as sdnG and sdnP to construct the cyclopentadiene moiety (PubMed:27072286). The FAD-dependent oxidoreductase sdnN is proposed to catalyze the oxidation at C9 of the hydroxylated cycloaraneosene derivative and also catalyze the Baeyer-Villiger oxidation to give the lactone intermediate (PubMed:27072286). The presumed lactone intermediate would be hydrolyzed to give an acrolein moiety and a carboxylate moiety (PubMed:27072286). Then, [4+2]cycloaddition would occur between the acrolein moiety and the cyclopentadiene moiety to give sordaricin (PubMed:27072286). SdnN might also be involved in the [4+2]cycloaddition after the hypothesized oxidation to accommodate the oxidized product and prompt the [4+2]cycloaddition (PubMed:27072286). GDP-6-deoxy-D-altrose may be biosynthesized from GDP-D-mannose by the putative GDP-mannose-4,6-dehydratase sdnI and the short-chain dehydrogenase sdnK (PubMed:27072286). The glycosyltransferase sdnJ catalyzes the attachment of 6-deoxy-D-altrose onto the 19-hydroxy group of sordaricin to give 4'-O-demethylsordarin (PubMed:27072286). The methyltransferase sdnD would complete the biosynthesis of sordarin (PubMed:27072286). Sordarin can be further modified into hypoxysordarin (PubMed:27072286). The unique acyl chain at the 3'-hydroxy group of hypoxysordarin would be constructed by an iterative type I PKS sdnO and the trans-acting polyketide methyltransferase sdnL. SdnL would be responsible for the introduction of an alpha-methyl group of the polyketide chain (PubMed:27072286). Alternatively, the beta-lactamase-like protein sdnR might be responsible for the cleavage and transfer of the polyketide chain from the PKS sdnO to sordarin (PubMed:27072286). Two putative cytochrome P450 monooxygenases, sdnQ and sdnT, might catalyze the epoxidations of the polyketide chain to complete the biosynthesis of hypoxysordarin (PubMed:27072286). Transcriptional regulators sdnM and sdnS are presumably encoded for the transcriptional regulation of the expression of the sdn gene cluster (PubMed:27072286).</text>
</comment>
<comment type="cofactor">
    <cofactor evidence="1">
        <name>heme</name>
        <dbReference type="ChEBI" id="CHEBI:30413"/>
    </cofactor>
</comment>
<comment type="pathway">
    <text evidence="8">Antibiotic biosynthesis.</text>
</comment>
<comment type="subcellular location">
    <subcellularLocation>
        <location evidence="2">Membrane</location>
        <topology evidence="2">Single-pass membrane protein</topology>
    </subcellularLocation>
</comment>
<comment type="similarity">
    <text evidence="7">Belongs to the cytochrome P450 family.</text>
</comment>
<name>SDNT_SORAA</name>
<gene>
    <name evidence="6" type="primary">sdnT</name>
</gene>
<feature type="chain" id="PRO_0000441054" description="Cytochrome P450 monooxygenase sdnT">
    <location>
        <begin position="1"/>
        <end position="558"/>
    </location>
</feature>
<feature type="transmembrane region" description="Helical" evidence="2">
    <location>
        <begin position="21"/>
        <end position="41"/>
    </location>
</feature>
<feature type="region of interest" description="Disordered" evidence="4">
    <location>
        <begin position="298"/>
        <end position="317"/>
    </location>
</feature>
<feature type="binding site" description="axial binding residue" evidence="1">
    <location>
        <position position="505"/>
    </location>
    <ligand>
        <name>heme</name>
        <dbReference type="ChEBI" id="CHEBI:30413"/>
    </ligand>
    <ligandPart>
        <name>Fe</name>
        <dbReference type="ChEBI" id="CHEBI:18248"/>
    </ligandPart>
</feature>
<feature type="glycosylation site" description="N-linked (GlcNAc...) asparagine" evidence="3">
    <location>
        <position position="464"/>
    </location>
</feature>
<feature type="glycosylation site" description="N-linked (GlcNAc...) asparagine" evidence="3">
    <location>
        <position position="495"/>
    </location>
</feature>
<reference key="1">
    <citation type="journal article" date="2016" name="J. Antibiot.">
        <title>Genome mining of the sordarin biosynthetic gene cluster from Sordaria araneosa Cain ATCC 36386: characterization of cycloaraneosene synthase and GDP-6-deoxyaltrose transferase.</title>
        <authorList>
            <person name="Kudo F."/>
            <person name="Matsuura Y."/>
            <person name="Hayashi T."/>
            <person name="Fukushima M."/>
            <person name="Eguchi T."/>
        </authorList>
    </citation>
    <scope>NUCLEOTIDE SEQUENCE [GENOMIC DNA]</scope>
    <scope>FUNCTION</scope>
    <scope>PATHWAY</scope>
    <source>
        <strain>ATCC 36386 / NRRL 3196</strain>
    </source>
</reference>
<proteinExistence type="inferred from homology"/>
<protein>
    <recommendedName>
        <fullName evidence="6">Cytochrome P450 monooxygenase sdnT</fullName>
        <ecNumber evidence="8">1.-.-.-</ecNumber>
    </recommendedName>
    <alternativeName>
        <fullName evidence="6">Sordarin/hypoxysordarin biosynthesis cluster protein C</fullName>
    </alternativeName>
</protein>
<evidence type="ECO:0000250" key="1">
    <source>
        <dbReference type="UniProtKB" id="P04798"/>
    </source>
</evidence>
<evidence type="ECO:0000255" key="2"/>
<evidence type="ECO:0000255" key="3">
    <source>
        <dbReference type="PROSITE-ProRule" id="PRU00498"/>
    </source>
</evidence>
<evidence type="ECO:0000256" key="4">
    <source>
        <dbReference type="SAM" id="MobiDB-lite"/>
    </source>
</evidence>
<evidence type="ECO:0000269" key="5">
    <source>
    </source>
</evidence>
<evidence type="ECO:0000303" key="6">
    <source>
    </source>
</evidence>
<evidence type="ECO:0000305" key="7"/>
<evidence type="ECO:0000305" key="8">
    <source>
    </source>
</evidence>
<keyword id="KW-0045">Antibiotic biosynthesis</keyword>
<keyword id="KW-0325">Glycoprotein</keyword>
<keyword id="KW-0349">Heme</keyword>
<keyword id="KW-0408">Iron</keyword>
<keyword id="KW-0472">Membrane</keyword>
<keyword id="KW-0479">Metal-binding</keyword>
<keyword id="KW-0503">Monooxygenase</keyword>
<keyword id="KW-0560">Oxidoreductase</keyword>
<keyword id="KW-0812">Transmembrane</keyword>
<keyword id="KW-1133">Transmembrane helix</keyword>
<sequence>MELLSLGSRQRPSLHEIGLSIISLTTCFVCAFAVSFVALAIYRAHLHPLAAIPGPKLAALSSAWQAYHARNGRMLVLGKTLHAVYGPIVRVGPNEVWLNSPDAFRSIYGAGNGYEKSDFYLSTVLNKPAIDWGLNLHFPDTLDLLSEFDTRRYRLQRRLVGPVYQANNIKKFQNAVDDVIERAVAQLRTLDGAEVDLKEWMHIIVVECLGAVVLSWSPGYIAAETDGGTGTQSYLGWKRKSVFGLFPLVTTATFFSKGLGRLFSNLWGVTFPTPKNFKPFFTPVYHKSSKRINVALRQNAGSNTRPKPPKRKQDTQPNDLLTDLIQLHKAKAEFTEQYLRRMAITNFGAGHETMCSALTSIMAMVGSHPAVQGRIIDELGSHGYLPSTCTSKDQKPIAGQTHIDYDAAASLTYCLAAIKEAQRLYPVIGMSLSRKVPASGLSVHDVYIPPGTTVGCSPVSLHRNTTIFGDDASCFNPERWLQDNVEARRAMERYNLTWGGGGRTCPGRHLAEMVVWKVVPALLREFEVVVTKMPNDVEVEYYFMAMLTGVRARFIPRR</sequence>
<accession>A0A1B4XBI3</accession>